<gene>
    <name evidence="1" type="primary">rpsN</name>
    <name type="ordered locus">MRA_2071</name>
</gene>
<feature type="chain" id="PRO_1000128457" description="Small ribosomal subunit protein uS14A">
    <location>
        <begin position="1"/>
        <end position="101"/>
    </location>
</feature>
<feature type="region of interest" description="Disordered" evidence="2">
    <location>
        <begin position="28"/>
        <end position="57"/>
    </location>
</feature>
<feature type="compositionally biased region" description="Polar residues" evidence="2">
    <location>
        <begin position="33"/>
        <end position="45"/>
    </location>
</feature>
<protein>
    <recommendedName>
        <fullName evidence="1">Small ribosomal subunit protein uS14A</fullName>
    </recommendedName>
    <alternativeName>
        <fullName evidence="3">30S ribosomal protein S14</fullName>
    </alternativeName>
</protein>
<name>RS14_MYCTA</name>
<sequence>MAKKSKIVKNQRRAATVARYASRRTALKDIIRSPSSAPEQRSTAQRALARQPRDASPVRLRNRDAIDGRPRGHLRKFGLSRVRVRQLAHDGHLPGVRKASW</sequence>
<dbReference type="EMBL" id="CP000611">
    <property type="protein sequence ID" value="ABQ73831.1"/>
    <property type="molecule type" value="Genomic_DNA"/>
</dbReference>
<dbReference type="RefSeq" id="WP_003410624.1">
    <property type="nucleotide sequence ID" value="NZ_CP016972.1"/>
</dbReference>
<dbReference type="SMR" id="A5U481"/>
<dbReference type="GeneID" id="45426034"/>
<dbReference type="KEGG" id="mra:MRA_2071"/>
<dbReference type="eggNOG" id="COG0199">
    <property type="taxonomic scope" value="Bacteria"/>
</dbReference>
<dbReference type="HOGENOM" id="CLU_139869_0_1_11"/>
<dbReference type="Proteomes" id="UP000001988">
    <property type="component" value="Chromosome"/>
</dbReference>
<dbReference type="GO" id="GO:0015935">
    <property type="term" value="C:small ribosomal subunit"/>
    <property type="evidence" value="ECO:0007669"/>
    <property type="project" value="TreeGrafter"/>
</dbReference>
<dbReference type="GO" id="GO:0019843">
    <property type="term" value="F:rRNA binding"/>
    <property type="evidence" value="ECO:0007669"/>
    <property type="project" value="UniProtKB-UniRule"/>
</dbReference>
<dbReference type="GO" id="GO:0003735">
    <property type="term" value="F:structural constituent of ribosome"/>
    <property type="evidence" value="ECO:0007669"/>
    <property type="project" value="InterPro"/>
</dbReference>
<dbReference type="GO" id="GO:0006412">
    <property type="term" value="P:translation"/>
    <property type="evidence" value="ECO:0007669"/>
    <property type="project" value="UniProtKB-UniRule"/>
</dbReference>
<dbReference type="FunFam" id="1.10.287.1480:FF:000001">
    <property type="entry name" value="30S ribosomal protein S14"/>
    <property type="match status" value="1"/>
</dbReference>
<dbReference type="Gene3D" id="1.10.287.1480">
    <property type="match status" value="1"/>
</dbReference>
<dbReference type="HAMAP" id="MF_00537">
    <property type="entry name" value="Ribosomal_uS14_1"/>
    <property type="match status" value="1"/>
</dbReference>
<dbReference type="InterPro" id="IPR001209">
    <property type="entry name" value="Ribosomal_uS14"/>
</dbReference>
<dbReference type="InterPro" id="IPR023036">
    <property type="entry name" value="Ribosomal_uS14_bac/plastid"/>
</dbReference>
<dbReference type="NCBIfam" id="NF006477">
    <property type="entry name" value="PRK08881.1"/>
    <property type="match status" value="1"/>
</dbReference>
<dbReference type="PANTHER" id="PTHR19836">
    <property type="entry name" value="30S RIBOSOMAL PROTEIN S14"/>
    <property type="match status" value="1"/>
</dbReference>
<dbReference type="PANTHER" id="PTHR19836:SF23">
    <property type="entry name" value="SMALL RIBOSOMAL SUBUNIT PROTEIN US14A"/>
    <property type="match status" value="1"/>
</dbReference>
<dbReference type="Pfam" id="PF00253">
    <property type="entry name" value="Ribosomal_S14"/>
    <property type="match status" value="1"/>
</dbReference>
<dbReference type="SUPFAM" id="SSF57716">
    <property type="entry name" value="Glucocorticoid receptor-like (DNA-binding domain)"/>
    <property type="match status" value="1"/>
</dbReference>
<evidence type="ECO:0000255" key="1">
    <source>
        <dbReference type="HAMAP-Rule" id="MF_00537"/>
    </source>
</evidence>
<evidence type="ECO:0000256" key="2">
    <source>
        <dbReference type="SAM" id="MobiDB-lite"/>
    </source>
</evidence>
<evidence type="ECO:0000305" key="3"/>
<proteinExistence type="inferred from homology"/>
<reference key="1">
    <citation type="journal article" date="2008" name="PLoS ONE">
        <title>Genetic basis of virulence attenuation revealed by comparative genomic analysis of Mycobacterium tuberculosis strain H37Ra versus H37Rv.</title>
        <authorList>
            <person name="Zheng H."/>
            <person name="Lu L."/>
            <person name="Wang B."/>
            <person name="Pu S."/>
            <person name="Zhang X."/>
            <person name="Zhu G."/>
            <person name="Shi W."/>
            <person name="Zhang L."/>
            <person name="Wang H."/>
            <person name="Wang S."/>
            <person name="Zhao G."/>
            <person name="Zhang Y."/>
        </authorList>
    </citation>
    <scope>NUCLEOTIDE SEQUENCE [LARGE SCALE GENOMIC DNA]</scope>
    <source>
        <strain>ATCC 25177 / H37Ra</strain>
    </source>
</reference>
<keyword id="KW-1185">Reference proteome</keyword>
<keyword id="KW-0687">Ribonucleoprotein</keyword>
<keyword id="KW-0689">Ribosomal protein</keyword>
<keyword id="KW-0694">RNA-binding</keyword>
<keyword id="KW-0699">rRNA-binding</keyword>
<accession>A5U481</accession>
<organism>
    <name type="scientific">Mycobacterium tuberculosis (strain ATCC 25177 / H37Ra)</name>
    <dbReference type="NCBI Taxonomy" id="419947"/>
    <lineage>
        <taxon>Bacteria</taxon>
        <taxon>Bacillati</taxon>
        <taxon>Actinomycetota</taxon>
        <taxon>Actinomycetes</taxon>
        <taxon>Mycobacteriales</taxon>
        <taxon>Mycobacteriaceae</taxon>
        <taxon>Mycobacterium</taxon>
        <taxon>Mycobacterium tuberculosis complex</taxon>
    </lineage>
</organism>
<comment type="function">
    <text evidence="1">Binds 16S rRNA, required for the assembly of 30S particles and may also be responsible for determining the conformation of the 16S rRNA at the A site.</text>
</comment>
<comment type="subunit">
    <text evidence="1">Part of the 30S ribosomal subunit. Contacts proteins S3 and S10.</text>
</comment>
<comment type="similarity">
    <text evidence="1">Belongs to the universal ribosomal protein uS14 family.</text>
</comment>